<dbReference type="EMBL" id="CP000628">
    <property type="protein sequence ID" value="ACM28343.1"/>
    <property type="molecule type" value="Genomic_DNA"/>
</dbReference>
<dbReference type="RefSeq" id="WP_006724402.1">
    <property type="nucleotide sequence ID" value="NC_011985.1"/>
</dbReference>
<dbReference type="SMR" id="B9JDZ7"/>
<dbReference type="STRING" id="311403.Arad_4685"/>
<dbReference type="GeneID" id="86850215"/>
<dbReference type="KEGG" id="ara:Arad_4685"/>
<dbReference type="eggNOG" id="COG0333">
    <property type="taxonomic scope" value="Bacteria"/>
</dbReference>
<dbReference type="HOGENOM" id="CLU_129084_2_2_5"/>
<dbReference type="Proteomes" id="UP000001600">
    <property type="component" value="Chromosome 1"/>
</dbReference>
<dbReference type="GO" id="GO:0015934">
    <property type="term" value="C:large ribosomal subunit"/>
    <property type="evidence" value="ECO:0007669"/>
    <property type="project" value="InterPro"/>
</dbReference>
<dbReference type="GO" id="GO:0003735">
    <property type="term" value="F:structural constituent of ribosome"/>
    <property type="evidence" value="ECO:0007669"/>
    <property type="project" value="InterPro"/>
</dbReference>
<dbReference type="GO" id="GO:0006412">
    <property type="term" value="P:translation"/>
    <property type="evidence" value="ECO:0007669"/>
    <property type="project" value="UniProtKB-UniRule"/>
</dbReference>
<dbReference type="Gene3D" id="1.20.5.640">
    <property type="entry name" value="Single helix bin"/>
    <property type="match status" value="1"/>
</dbReference>
<dbReference type="HAMAP" id="MF_00340">
    <property type="entry name" value="Ribosomal_bL32"/>
    <property type="match status" value="1"/>
</dbReference>
<dbReference type="InterPro" id="IPR002677">
    <property type="entry name" value="Ribosomal_bL32"/>
</dbReference>
<dbReference type="InterPro" id="IPR044957">
    <property type="entry name" value="Ribosomal_bL32_bact"/>
</dbReference>
<dbReference type="InterPro" id="IPR011332">
    <property type="entry name" value="Ribosomal_zn-bd"/>
</dbReference>
<dbReference type="NCBIfam" id="TIGR01031">
    <property type="entry name" value="rpmF_bact"/>
    <property type="match status" value="1"/>
</dbReference>
<dbReference type="PANTHER" id="PTHR35534">
    <property type="entry name" value="50S RIBOSOMAL PROTEIN L32"/>
    <property type="match status" value="1"/>
</dbReference>
<dbReference type="PANTHER" id="PTHR35534:SF1">
    <property type="entry name" value="LARGE RIBOSOMAL SUBUNIT PROTEIN BL32"/>
    <property type="match status" value="1"/>
</dbReference>
<dbReference type="Pfam" id="PF01783">
    <property type="entry name" value="Ribosomal_L32p"/>
    <property type="match status" value="1"/>
</dbReference>
<dbReference type="SUPFAM" id="SSF57829">
    <property type="entry name" value="Zn-binding ribosomal proteins"/>
    <property type="match status" value="1"/>
</dbReference>
<organism>
    <name type="scientific">Rhizobium rhizogenes (strain K84 / ATCC BAA-868)</name>
    <name type="common">Agrobacterium radiobacter</name>
    <dbReference type="NCBI Taxonomy" id="311403"/>
    <lineage>
        <taxon>Bacteria</taxon>
        <taxon>Pseudomonadati</taxon>
        <taxon>Pseudomonadota</taxon>
        <taxon>Alphaproteobacteria</taxon>
        <taxon>Hyphomicrobiales</taxon>
        <taxon>Rhizobiaceae</taxon>
        <taxon>Rhizobium/Agrobacterium group</taxon>
        <taxon>Rhizobium</taxon>
    </lineage>
</organism>
<protein>
    <recommendedName>
        <fullName evidence="1">Large ribosomal subunit protein bL32</fullName>
    </recommendedName>
    <alternativeName>
        <fullName evidence="3">50S ribosomal protein L32</fullName>
    </alternativeName>
</protein>
<name>RL32_RHIR8</name>
<keyword id="KW-0687">Ribonucleoprotein</keyword>
<keyword id="KW-0689">Ribosomal protein</keyword>
<proteinExistence type="inferred from homology"/>
<accession>B9JDZ7</accession>
<comment type="similarity">
    <text evidence="1">Belongs to the bacterial ribosomal protein bL32 family.</text>
</comment>
<gene>
    <name evidence="1" type="primary">rpmF</name>
    <name type="ordered locus">Arad_4685</name>
</gene>
<feature type="chain" id="PRO_1000195951" description="Large ribosomal subunit protein bL32">
    <location>
        <begin position="1"/>
        <end position="61"/>
    </location>
</feature>
<feature type="region of interest" description="Disordered" evidence="2">
    <location>
        <begin position="1"/>
        <end position="41"/>
    </location>
</feature>
<feature type="compositionally biased region" description="Basic residues" evidence="2">
    <location>
        <begin position="1"/>
        <end position="16"/>
    </location>
</feature>
<feature type="compositionally biased region" description="Basic and acidic residues" evidence="2">
    <location>
        <begin position="28"/>
        <end position="41"/>
    </location>
</feature>
<reference key="1">
    <citation type="journal article" date="2009" name="J. Bacteriol.">
        <title>Genome sequences of three Agrobacterium biovars help elucidate the evolution of multichromosome genomes in bacteria.</title>
        <authorList>
            <person name="Slater S.C."/>
            <person name="Goldman B.S."/>
            <person name="Goodner B."/>
            <person name="Setubal J.C."/>
            <person name="Farrand S.K."/>
            <person name="Nester E.W."/>
            <person name="Burr T.J."/>
            <person name="Banta L."/>
            <person name="Dickerman A.W."/>
            <person name="Paulsen I."/>
            <person name="Otten L."/>
            <person name="Suen G."/>
            <person name="Welch R."/>
            <person name="Almeida N.F."/>
            <person name="Arnold F."/>
            <person name="Burton O.T."/>
            <person name="Du Z."/>
            <person name="Ewing A."/>
            <person name="Godsy E."/>
            <person name="Heisel S."/>
            <person name="Houmiel K.L."/>
            <person name="Jhaveri J."/>
            <person name="Lu J."/>
            <person name="Miller N.M."/>
            <person name="Norton S."/>
            <person name="Chen Q."/>
            <person name="Phoolcharoen W."/>
            <person name="Ohlin V."/>
            <person name="Ondrusek D."/>
            <person name="Pride N."/>
            <person name="Stricklin S.L."/>
            <person name="Sun J."/>
            <person name="Wheeler C."/>
            <person name="Wilson L."/>
            <person name="Zhu H."/>
            <person name="Wood D.W."/>
        </authorList>
    </citation>
    <scope>NUCLEOTIDE SEQUENCE [LARGE SCALE GENOMIC DNA]</scope>
    <source>
        <strain>K84 / ATCC BAA-868</strain>
    </source>
</reference>
<evidence type="ECO:0000255" key="1">
    <source>
        <dbReference type="HAMAP-Rule" id="MF_00340"/>
    </source>
</evidence>
<evidence type="ECO:0000256" key="2">
    <source>
        <dbReference type="SAM" id="MobiDB-lite"/>
    </source>
</evidence>
<evidence type="ECO:0000305" key="3"/>
<sequence length="61" mass="6896">MAVPKRKTSPSKRGMRRSADALKASTYVEDKNSGELRRPHHIDLKTGMYRGRQVLTPKESA</sequence>